<dbReference type="EC" id="3.5.4.16" evidence="2"/>
<dbReference type="EMBL" id="CP000026">
    <property type="protein sequence ID" value="AAV76657.1"/>
    <property type="molecule type" value="Genomic_DNA"/>
</dbReference>
<dbReference type="RefSeq" id="WP_001139611.1">
    <property type="nucleotide sequence ID" value="NC_006511.1"/>
</dbReference>
<dbReference type="SMR" id="Q5PE52"/>
<dbReference type="KEGG" id="spt:SPA0658"/>
<dbReference type="HOGENOM" id="CLU_049768_3_2_6"/>
<dbReference type="UniPathway" id="UPA00848">
    <property type="reaction ID" value="UER00151"/>
</dbReference>
<dbReference type="Proteomes" id="UP000008185">
    <property type="component" value="Chromosome"/>
</dbReference>
<dbReference type="GO" id="GO:0005737">
    <property type="term" value="C:cytoplasm"/>
    <property type="evidence" value="ECO:0007669"/>
    <property type="project" value="TreeGrafter"/>
</dbReference>
<dbReference type="GO" id="GO:0005525">
    <property type="term" value="F:GTP binding"/>
    <property type="evidence" value="ECO:0007669"/>
    <property type="project" value="UniProtKB-KW"/>
</dbReference>
<dbReference type="GO" id="GO:0003934">
    <property type="term" value="F:GTP cyclohydrolase I activity"/>
    <property type="evidence" value="ECO:0007669"/>
    <property type="project" value="UniProtKB-UniRule"/>
</dbReference>
<dbReference type="GO" id="GO:0008270">
    <property type="term" value="F:zinc ion binding"/>
    <property type="evidence" value="ECO:0007669"/>
    <property type="project" value="UniProtKB-UniRule"/>
</dbReference>
<dbReference type="GO" id="GO:0006730">
    <property type="term" value="P:one-carbon metabolic process"/>
    <property type="evidence" value="ECO:0007669"/>
    <property type="project" value="UniProtKB-UniRule"/>
</dbReference>
<dbReference type="GO" id="GO:0006729">
    <property type="term" value="P:tetrahydrobiopterin biosynthetic process"/>
    <property type="evidence" value="ECO:0007669"/>
    <property type="project" value="TreeGrafter"/>
</dbReference>
<dbReference type="GO" id="GO:0046654">
    <property type="term" value="P:tetrahydrofolate biosynthetic process"/>
    <property type="evidence" value="ECO:0007669"/>
    <property type="project" value="UniProtKB-UniRule"/>
</dbReference>
<dbReference type="CDD" id="cd00642">
    <property type="entry name" value="GTP_cyclohydro1"/>
    <property type="match status" value="1"/>
</dbReference>
<dbReference type="FunFam" id="1.10.286.10:FF:000002">
    <property type="entry name" value="GTP cyclohydrolase 1"/>
    <property type="match status" value="1"/>
</dbReference>
<dbReference type="FunFam" id="3.30.1130.10:FF:000001">
    <property type="entry name" value="GTP cyclohydrolase 1"/>
    <property type="match status" value="1"/>
</dbReference>
<dbReference type="Gene3D" id="1.10.286.10">
    <property type="match status" value="1"/>
</dbReference>
<dbReference type="Gene3D" id="3.30.1130.10">
    <property type="match status" value="1"/>
</dbReference>
<dbReference type="HAMAP" id="MF_00223">
    <property type="entry name" value="FolE"/>
    <property type="match status" value="1"/>
</dbReference>
<dbReference type="InterPro" id="IPR043133">
    <property type="entry name" value="GTP-CH-I_C/QueF"/>
</dbReference>
<dbReference type="InterPro" id="IPR043134">
    <property type="entry name" value="GTP-CH-I_N"/>
</dbReference>
<dbReference type="InterPro" id="IPR001474">
    <property type="entry name" value="GTP_CycHdrlase_I"/>
</dbReference>
<dbReference type="InterPro" id="IPR018234">
    <property type="entry name" value="GTP_CycHdrlase_I_CS"/>
</dbReference>
<dbReference type="InterPro" id="IPR020602">
    <property type="entry name" value="GTP_CycHdrlase_I_dom"/>
</dbReference>
<dbReference type="NCBIfam" id="TIGR00063">
    <property type="entry name" value="folE"/>
    <property type="match status" value="1"/>
</dbReference>
<dbReference type="NCBIfam" id="NF006824">
    <property type="entry name" value="PRK09347.1-1"/>
    <property type="match status" value="1"/>
</dbReference>
<dbReference type="NCBIfam" id="NF006825">
    <property type="entry name" value="PRK09347.1-2"/>
    <property type="match status" value="1"/>
</dbReference>
<dbReference type="NCBIfam" id="NF006826">
    <property type="entry name" value="PRK09347.1-3"/>
    <property type="match status" value="1"/>
</dbReference>
<dbReference type="PANTHER" id="PTHR11109:SF7">
    <property type="entry name" value="GTP CYCLOHYDROLASE 1"/>
    <property type="match status" value="1"/>
</dbReference>
<dbReference type="PANTHER" id="PTHR11109">
    <property type="entry name" value="GTP CYCLOHYDROLASE I"/>
    <property type="match status" value="1"/>
</dbReference>
<dbReference type="Pfam" id="PF01227">
    <property type="entry name" value="GTP_cyclohydroI"/>
    <property type="match status" value="1"/>
</dbReference>
<dbReference type="SUPFAM" id="SSF55620">
    <property type="entry name" value="Tetrahydrobiopterin biosynthesis enzymes-like"/>
    <property type="match status" value="1"/>
</dbReference>
<dbReference type="PROSITE" id="PS00859">
    <property type="entry name" value="GTP_CYCLOHYDROL_1_1"/>
    <property type="match status" value="1"/>
</dbReference>
<dbReference type="PROSITE" id="PS00860">
    <property type="entry name" value="GTP_CYCLOHYDROL_1_2"/>
    <property type="match status" value="1"/>
</dbReference>
<feature type="chain" id="PRO_1000043727" description="GTP cyclohydrolase 1">
    <location>
        <begin position="1"/>
        <end position="222"/>
    </location>
</feature>
<feature type="binding site" evidence="2">
    <location>
        <position position="111"/>
    </location>
    <ligand>
        <name>Zn(2+)</name>
        <dbReference type="ChEBI" id="CHEBI:29105"/>
    </ligand>
</feature>
<feature type="binding site" evidence="2">
    <location>
        <position position="114"/>
    </location>
    <ligand>
        <name>Zn(2+)</name>
        <dbReference type="ChEBI" id="CHEBI:29105"/>
    </ligand>
</feature>
<feature type="binding site" evidence="2">
    <location>
        <position position="182"/>
    </location>
    <ligand>
        <name>Zn(2+)</name>
        <dbReference type="ChEBI" id="CHEBI:29105"/>
    </ligand>
</feature>
<organism>
    <name type="scientific">Salmonella paratyphi A (strain ATCC 9150 / SARB42)</name>
    <dbReference type="NCBI Taxonomy" id="295319"/>
    <lineage>
        <taxon>Bacteria</taxon>
        <taxon>Pseudomonadati</taxon>
        <taxon>Pseudomonadota</taxon>
        <taxon>Gammaproteobacteria</taxon>
        <taxon>Enterobacterales</taxon>
        <taxon>Enterobacteriaceae</taxon>
        <taxon>Salmonella</taxon>
    </lineage>
</organism>
<accession>Q5PE52</accession>
<proteinExistence type="inferred from homology"/>
<name>GCH1_SALPA</name>
<keyword id="KW-0342">GTP-binding</keyword>
<keyword id="KW-0378">Hydrolase</keyword>
<keyword id="KW-0479">Metal-binding</keyword>
<keyword id="KW-0547">Nucleotide-binding</keyword>
<keyword id="KW-0554">One-carbon metabolism</keyword>
<keyword id="KW-0862">Zinc</keyword>
<reference key="1">
    <citation type="journal article" date="2004" name="Nat. Genet.">
        <title>Comparison of genome degradation in Paratyphi A and Typhi, human-restricted serovars of Salmonella enterica that cause typhoid.</title>
        <authorList>
            <person name="McClelland M."/>
            <person name="Sanderson K.E."/>
            <person name="Clifton S.W."/>
            <person name="Latreille P."/>
            <person name="Porwollik S."/>
            <person name="Sabo A."/>
            <person name="Meyer R."/>
            <person name="Bieri T."/>
            <person name="Ozersky P."/>
            <person name="McLellan M."/>
            <person name="Harkins C.R."/>
            <person name="Wang C."/>
            <person name="Nguyen C."/>
            <person name="Berghoff A."/>
            <person name="Elliott G."/>
            <person name="Kohlberg S."/>
            <person name="Strong C."/>
            <person name="Du F."/>
            <person name="Carter J."/>
            <person name="Kremizki C."/>
            <person name="Layman D."/>
            <person name="Leonard S."/>
            <person name="Sun H."/>
            <person name="Fulton L."/>
            <person name="Nash W."/>
            <person name="Miner T."/>
            <person name="Minx P."/>
            <person name="Delehaunty K."/>
            <person name="Fronick C."/>
            <person name="Magrini V."/>
            <person name="Nhan M."/>
            <person name="Warren W."/>
            <person name="Florea L."/>
            <person name="Spieth J."/>
            <person name="Wilson R.K."/>
        </authorList>
    </citation>
    <scope>NUCLEOTIDE SEQUENCE [LARGE SCALE GENOMIC DNA]</scope>
    <source>
        <strain>ATCC 9150 / SARB42</strain>
    </source>
</reference>
<sequence>MPSLSKEAALVHDALVARGLETPLRPPMDELDNETRKSLIAGHMTEIMQLLNLDLSDDSLMETPHRIAKMYVDEIFAGLDYANFPKITLIENKMKVDEMVTVRDITLTSTCEHHFVTIDGKATVAYIPKDSVIGLSKINRIVQFFAQRPQVQERLTQQILTALQTLLGTNNVAVSIDAVHYCVKARGIRDATSATTTTSLGGLFKSSQNTRQEFLRAVRHHP</sequence>
<comment type="catalytic activity">
    <reaction evidence="2">
        <text>GTP + H2O = 7,8-dihydroneopterin 3'-triphosphate + formate + H(+)</text>
        <dbReference type="Rhea" id="RHEA:17473"/>
        <dbReference type="ChEBI" id="CHEBI:15377"/>
        <dbReference type="ChEBI" id="CHEBI:15378"/>
        <dbReference type="ChEBI" id="CHEBI:15740"/>
        <dbReference type="ChEBI" id="CHEBI:37565"/>
        <dbReference type="ChEBI" id="CHEBI:58462"/>
        <dbReference type="EC" id="3.5.4.16"/>
    </reaction>
</comment>
<comment type="pathway">
    <text evidence="2">Cofactor biosynthesis; 7,8-dihydroneopterin triphosphate biosynthesis; 7,8-dihydroneopterin triphosphate from GTP: step 1/1.</text>
</comment>
<comment type="subunit">
    <text evidence="1">Toroid-shaped homodecamer, composed of two pentamers of five dimers.</text>
</comment>
<comment type="similarity">
    <text evidence="2">Belongs to the GTP cyclohydrolase I family.</text>
</comment>
<gene>
    <name evidence="2" type="primary">folE</name>
    <name type="ordered locus">SPA0658</name>
</gene>
<protein>
    <recommendedName>
        <fullName evidence="2">GTP cyclohydrolase 1</fullName>
        <ecNumber evidence="2">3.5.4.16</ecNumber>
    </recommendedName>
    <alternativeName>
        <fullName evidence="2">GTP cyclohydrolase I</fullName>
        <shortName evidence="2">GTP-CH-I</shortName>
    </alternativeName>
</protein>
<evidence type="ECO:0000250" key="1"/>
<evidence type="ECO:0000255" key="2">
    <source>
        <dbReference type="HAMAP-Rule" id="MF_00223"/>
    </source>
</evidence>